<keyword id="KW-1003">Cell membrane</keyword>
<keyword id="KW-0444">Lipid biosynthesis</keyword>
<keyword id="KW-0443">Lipid metabolism</keyword>
<keyword id="KW-0460">Magnesium</keyword>
<keyword id="KW-0472">Membrane</keyword>
<keyword id="KW-0594">Phospholipid biosynthesis</keyword>
<keyword id="KW-1208">Phospholipid metabolism</keyword>
<keyword id="KW-1185">Reference proteome</keyword>
<keyword id="KW-0808">Transferase</keyword>
<keyword id="KW-0812">Transmembrane</keyword>
<keyword id="KW-1133">Transmembrane helix</keyword>
<accession>Q3INH7</accession>
<comment type="function">
    <text evidence="1">Prenyltransferase that catalyzes the transfer of the geranylgeranyl moiety of geranylgeranyl diphosphate (GGPP) to the C2 hydroxyl of (S)-3-O-geranylgeranylglyceryl phosphate (GGGP). This reaction is the second ether-bond-formation step in the biosynthesis of archaeal membrane lipids.</text>
</comment>
<comment type="catalytic activity">
    <reaction evidence="1">
        <text>sn-3-O-(geranylgeranyl)glycerol 1-phosphate + (2E,6E,10E)-geranylgeranyl diphosphate = 2,3-bis-O-(geranylgeranyl)-sn-glycerol 1-phosphate + diphosphate</text>
        <dbReference type="Rhea" id="RHEA:18109"/>
        <dbReference type="ChEBI" id="CHEBI:33019"/>
        <dbReference type="ChEBI" id="CHEBI:57677"/>
        <dbReference type="ChEBI" id="CHEBI:58756"/>
        <dbReference type="ChEBI" id="CHEBI:58837"/>
        <dbReference type="EC" id="2.5.1.42"/>
    </reaction>
</comment>
<comment type="cofactor">
    <cofactor evidence="1">
        <name>Mg(2+)</name>
        <dbReference type="ChEBI" id="CHEBI:18420"/>
    </cofactor>
</comment>
<comment type="pathway">
    <text evidence="1">Membrane lipid metabolism; glycerophospholipid metabolism.</text>
</comment>
<comment type="subcellular location">
    <subcellularLocation>
        <location evidence="1">Cell membrane</location>
        <topology evidence="1">Multi-pass membrane protein</topology>
    </subcellularLocation>
</comment>
<comment type="similarity">
    <text evidence="1">Belongs to the UbiA prenyltransferase family. DGGGP synthase subfamily.</text>
</comment>
<protein>
    <recommendedName>
        <fullName evidence="1">Digeranylgeranylglyceryl phosphate synthase</fullName>
        <shortName evidence="1">DGGGP synthase</shortName>
        <shortName evidence="1">DGGGPS</shortName>
        <ecNumber evidence="1">2.5.1.42</ecNumber>
    </recommendedName>
    <alternativeName>
        <fullName evidence="1">(S)-2,3-di-O-geranylgeranylglyceryl phosphate synthase</fullName>
    </alternativeName>
    <alternativeName>
        <fullName evidence="1">Geranylgeranylglycerol-phosphate geranylgeranyltransferase</fullName>
    </alternativeName>
</protein>
<sequence length="277" mass="28508">MERVRGLVELLRPGNAVAAGGLTFIGAFVAGGLSSPQSMAFAVVATVLATGAGNAINDYFDRDIDAINEPDRPIPRGAVSPRGALVYSVALFAVAVVLTLLLPWLAIAIAAINLVALVAYTEVFKGLPGVGNALVAYLTGSTFLYGGAAVGGDLAAVVVLFALAACATMAREIVKDVEDIDGDRAEGLRTLPIVIGERRSLYVAAGFVVVAVLSSPLPYLLGLFGWVYLVVLVPALCGLAAATWRSFSDPTTGQAWLKASMFAAAVAFVIGRLAVVA</sequence>
<dbReference type="EC" id="2.5.1.42" evidence="1"/>
<dbReference type="EMBL" id="CR936257">
    <property type="protein sequence ID" value="CAI50326.1"/>
    <property type="molecule type" value="Genomic_DNA"/>
</dbReference>
<dbReference type="RefSeq" id="WP_011323941.1">
    <property type="nucleotide sequence ID" value="NC_007426.1"/>
</dbReference>
<dbReference type="SMR" id="Q3INH7"/>
<dbReference type="STRING" id="348780.NP_4470A"/>
<dbReference type="EnsemblBacteria" id="CAI50326">
    <property type="protein sequence ID" value="CAI50326"/>
    <property type="gene ID" value="NP_4470A"/>
</dbReference>
<dbReference type="GeneID" id="3703434"/>
<dbReference type="KEGG" id="nph:NP_4470A"/>
<dbReference type="eggNOG" id="arCOG00476">
    <property type="taxonomic scope" value="Archaea"/>
</dbReference>
<dbReference type="HOGENOM" id="CLU_073311_1_1_2"/>
<dbReference type="OrthoDB" id="11851at2157"/>
<dbReference type="UniPathway" id="UPA00940"/>
<dbReference type="Proteomes" id="UP000002698">
    <property type="component" value="Chromosome"/>
</dbReference>
<dbReference type="GO" id="GO:0005886">
    <property type="term" value="C:plasma membrane"/>
    <property type="evidence" value="ECO:0007669"/>
    <property type="project" value="UniProtKB-SubCell"/>
</dbReference>
<dbReference type="GO" id="GO:0047295">
    <property type="term" value="F:geranylgeranylglycerol-phosphate geranylgeranyltransferase activity"/>
    <property type="evidence" value="ECO:0007669"/>
    <property type="project" value="UniProtKB-UniRule"/>
</dbReference>
<dbReference type="GO" id="GO:0000287">
    <property type="term" value="F:magnesium ion binding"/>
    <property type="evidence" value="ECO:0007669"/>
    <property type="project" value="UniProtKB-UniRule"/>
</dbReference>
<dbReference type="GO" id="GO:0046474">
    <property type="term" value="P:glycerophospholipid biosynthetic process"/>
    <property type="evidence" value="ECO:0007669"/>
    <property type="project" value="UniProtKB-UniRule"/>
</dbReference>
<dbReference type="CDD" id="cd13961">
    <property type="entry name" value="PT_UbiA_DGGGPS"/>
    <property type="match status" value="1"/>
</dbReference>
<dbReference type="Gene3D" id="1.10.357.140">
    <property type="entry name" value="UbiA prenyltransferase"/>
    <property type="match status" value="1"/>
</dbReference>
<dbReference type="Gene3D" id="1.20.120.1780">
    <property type="entry name" value="UbiA prenyltransferase"/>
    <property type="match status" value="1"/>
</dbReference>
<dbReference type="HAMAP" id="MF_01286">
    <property type="entry name" value="DGGGP_synth"/>
    <property type="match status" value="1"/>
</dbReference>
<dbReference type="InterPro" id="IPR023547">
    <property type="entry name" value="DGGGP_synth"/>
</dbReference>
<dbReference type="InterPro" id="IPR050475">
    <property type="entry name" value="Prenyltransferase_related"/>
</dbReference>
<dbReference type="InterPro" id="IPR000537">
    <property type="entry name" value="UbiA_prenyltransferase"/>
</dbReference>
<dbReference type="InterPro" id="IPR044878">
    <property type="entry name" value="UbiA_sf"/>
</dbReference>
<dbReference type="NCBIfam" id="NF009521">
    <property type="entry name" value="PRK12882.1"/>
    <property type="match status" value="1"/>
</dbReference>
<dbReference type="PANTHER" id="PTHR42723">
    <property type="entry name" value="CHLOROPHYLL SYNTHASE"/>
    <property type="match status" value="1"/>
</dbReference>
<dbReference type="PANTHER" id="PTHR42723:SF1">
    <property type="entry name" value="CHLOROPHYLL SYNTHASE, CHLOROPLASTIC"/>
    <property type="match status" value="1"/>
</dbReference>
<dbReference type="Pfam" id="PF01040">
    <property type="entry name" value="UbiA"/>
    <property type="match status" value="1"/>
</dbReference>
<gene>
    <name type="ordered locus">NP_4470A</name>
</gene>
<reference key="1">
    <citation type="journal article" date="2005" name="Genome Res.">
        <title>Living with two extremes: conclusions from the genome sequence of Natronomonas pharaonis.</title>
        <authorList>
            <person name="Falb M."/>
            <person name="Pfeiffer F."/>
            <person name="Palm P."/>
            <person name="Rodewald K."/>
            <person name="Hickmann V."/>
            <person name="Tittor J."/>
            <person name="Oesterhelt D."/>
        </authorList>
    </citation>
    <scope>NUCLEOTIDE SEQUENCE [LARGE SCALE GENOMIC DNA]</scope>
    <source>
        <strain>ATCC 35678 / DSM 2160 / CIP 103997 / JCM 8858 / NBRC 14720 / NCIMB 2260 / Gabara</strain>
    </source>
</reference>
<organism>
    <name type="scientific">Natronomonas pharaonis (strain ATCC 35678 / DSM 2160 / CIP 103997 / JCM 8858 / NBRC 14720 / NCIMB 2260 / Gabara)</name>
    <name type="common">Halobacterium pharaonis</name>
    <dbReference type="NCBI Taxonomy" id="348780"/>
    <lineage>
        <taxon>Archaea</taxon>
        <taxon>Methanobacteriati</taxon>
        <taxon>Methanobacteriota</taxon>
        <taxon>Stenosarchaea group</taxon>
        <taxon>Halobacteria</taxon>
        <taxon>Halobacteriales</taxon>
        <taxon>Haloarculaceae</taxon>
        <taxon>Natronomonas</taxon>
    </lineage>
</organism>
<name>DGGGP_NATPD</name>
<evidence type="ECO:0000255" key="1">
    <source>
        <dbReference type="HAMAP-Rule" id="MF_01286"/>
    </source>
</evidence>
<feature type="chain" id="PRO_0000350714" description="Digeranylgeranylglyceryl phosphate synthase">
    <location>
        <begin position="1"/>
        <end position="277"/>
    </location>
</feature>
<feature type="transmembrane region" description="Helical" evidence="1">
    <location>
        <begin position="13"/>
        <end position="33"/>
    </location>
</feature>
<feature type="transmembrane region" description="Helical" evidence="1">
    <location>
        <begin position="40"/>
        <end position="60"/>
    </location>
</feature>
<feature type="transmembrane region" description="Helical" evidence="1">
    <location>
        <begin position="89"/>
        <end position="109"/>
    </location>
</feature>
<feature type="transmembrane region" description="Helical" evidence="1">
    <location>
        <begin position="143"/>
        <end position="163"/>
    </location>
</feature>
<feature type="transmembrane region" description="Helical" evidence="1">
    <location>
        <begin position="199"/>
        <end position="219"/>
    </location>
</feature>
<feature type="transmembrane region" description="Helical" evidence="1">
    <location>
        <begin position="220"/>
        <end position="240"/>
    </location>
</feature>
<feature type="transmembrane region" description="Helical" evidence="1">
    <location>
        <begin position="256"/>
        <end position="276"/>
    </location>
</feature>
<proteinExistence type="inferred from homology"/>